<proteinExistence type="inferred from homology"/>
<reference key="1">
    <citation type="journal article" date="2006" name="PLoS Genet.">
        <title>The complete genome sequence and comparative genome analysis of the high pathogenicity Yersinia enterocolitica strain 8081.</title>
        <authorList>
            <person name="Thomson N.R."/>
            <person name="Howard S."/>
            <person name="Wren B.W."/>
            <person name="Holden M.T.G."/>
            <person name="Crossman L."/>
            <person name="Challis G.L."/>
            <person name="Churcher C."/>
            <person name="Mungall K."/>
            <person name="Brooks K."/>
            <person name="Chillingworth T."/>
            <person name="Feltwell T."/>
            <person name="Abdellah Z."/>
            <person name="Hauser H."/>
            <person name="Jagels K."/>
            <person name="Maddison M."/>
            <person name="Moule S."/>
            <person name="Sanders M."/>
            <person name="Whitehead S."/>
            <person name="Quail M.A."/>
            <person name="Dougan G."/>
            <person name="Parkhill J."/>
            <person name="Prentice M.B."/>
        </authorList>
    </citation>
    <scope>NUCLEOTIDE SEQUENCE [LARGE SCALE GENOMIC DNA]</scope>
    <source>
        <strain>NCTC 13174 / 8081</strain>
    </source>
</reference>
<accession>A1JJK1</accession>
<evidence type="ECO:0000255" key="1">
    <source>
        <dbReference type="HAMAP-Rule" id="MF_01332"/>
    </source>
</evidence>
<protein>
    <recommendedName>
        <fullName evidence="1">Secretion monitor</fullName>
    </recommendedName>
</protein>
<organism>
    <name type="scientific">Yersinia enterocolitica serotype O:8 / biotype 1B (strain NCTC 13174 / 8081)</name>
    <dbReference type="NCBI Taxonomy" id="393305"/>
    <lineage>
        <taxon>Bacteria</taxon>
        <taxon>Pseudomonadati</taxon>
        <taxon>Pseudomonadota</taxon>
        <taxon>Gammaproteobacteria</taxon>
        <taxon>Enterobacterales</taxon>
        <taxon>Yersiniaceae</taxon>
        <taxon>Yersinia</taxon>
    </lineage>
</organism>
<gene>
    <name evidence="1" type="primary">secM</name>
    <name type="ordered locus">YE0680</name>
</gene>
<comment type="function">
    <text evidence="1">Regulates secA expression by translational coupling of the secM secA operon. Translational pausing at a specific Pro residue 5 residues before the end of the protein may allow disruption of a mRNA repressor helix that normally suppresses secA translation initiation.</text>
</comment>
<comment type="subcellular location">
    <subcellularLocation>
        <location evidence="1">Cytoplasm</location>
        <location evidence="1">Cytosol</location>
    </subcellularLocation>
    <subcellularLocation>
        <location evidence="1">Periplasm</location>
    </subcellularLocation>
    <text evidence="1">The active form is cytosolic, while the periplasmic form is rapidly degraded, mainly by the tail-specific protease.</text>
</comment>
<comment type="similarity">
    <text evidence="1">Belongs to the SecM family.</text>
</comment>
<dbReference type="EMBL" id="AM286415">
    <property type="protein sequence ID" value="CAL10789.1"/>
    <property type="molecule type" value="Genomic_DNA"/>
</dbReference>
<dbReference type="RefSeq" id="WP_005156845.1">
    <property type="nucleotide sequence ID" value="NC_008800.1"/>
</dbReference>
<dbReference type="RefSeq" id="YP_001005029.1">
    <property type="nucleotide sequence ID" value="NC_008800.1"/>
</dbReference>
<dbReference type="GeneID" id="31411841"/>
<dbReference type="KEGG" id="yen:YE0680"/>
<dbReference type="PATRIC" id="fig|393305.7.peg.775"/>
<dbReference type="eggNOG" id="ENOG5031JGK">
    <property type="taxonomic scope" value="Bacteria"/>
</dbReference>
<dbReference type="HOGENOM" id="CLU_108853_0_0_6"/>
<dbReference type="OrthoDB" id="6495450at2"/>
<dbReference type="Proteomes" id="UP000000642">
    <property type="component" value="Chromosome"/>
</dbReference>
<dbReference type="GO" id="GO:0005829">
    <property type="term" value="C:cytosol"/>
    <property type="evidence" value="ECO:0007669"/>
    <property type="project" value="UniProtKB-SubCell"/>
</dbReference>
<dbReference type="GO" id="GO:0042597">
    <property type="term" value="C:periplasmic space"/>
    <property type="evidence" value="ECO:0007669"/>
    <property type="project" value="UniProtKB-SubCell"/>
</dbReference>
<dbReference type="GO" id="GO:0045182">
    <property type="term" value="F:translation regulator activity"/>
    <property type="evidence" value="ECO:0007669"/>
    <property type="project" value="InterPro"/>
</dbReference>
<dbReference type="HAMAP" id="MF_01332">
    <property type="entry name" value="SecM"/>
    <property type="match status" value="1"/>
</dbReference>
<dbReference type="InterPro" id="IPR009502">
    <property type="entry name" value="SecM"/>
</dbReference>
<dbReference type="NCBIfam" id="NF002799">
    <property type="entry name" value="PRK02943.1-1"/>
    <property type="match status" value="1"/>
</dbReference>
<dbReference type="Pfam" id="PF06558">
    <property type="entry name" value="SecM"/>
    <property type="match status" value="1"/>
</dbReference>
<dbReference type="PIRSF" id="PIRSF004572">
    <property type="entry name" value="SecM"/>
    <property type="match status" value="1"/>
</dbReference>
<feature type="signal peptide" evidence="1">
    <location>
        <begin position="1"/>
        <end position="30"/>
    </location>
</feature>
<feature type="chain" id="PRO_0000314453" description="Secretion monitor">
    <location>
        <begin position="31"/>
        <end position="177"/>
    </location>
</feature>
<name>SECM_YERE8</name>
<sequence>MIGILNRWRQFGRRYFWPHLLLGMVAASLGVPSNLSGVPDQAAIPNTSSSQSRQNYGATNFSSLALLHDMHRRPSFSVDYWQQHALRTVIRHLSFALAPQVAYARVQEVAEAEQVQPSQIQQLALLNTLNALLTHEFKPPTIIRYTEQIKRPVLSLHKPGLWLAQVQGIRAGPANFI</sequence>
<keyword id="KW-0963">Cytoplasm</keyword>
<keyword id="KW-0574">Periplasm</keyword>
<keyword id="KW-0732">Signal</keyword>